<sequence>MSSNTASSSAGAAGSGDSSAARKNSKRPKYSKFTQQELPACKPILTPGWVISTFLIVSVIFIPLGVISLFASQDVVEIVDRYDTECIPAPARTNKVAYIQGDGDKVCNRDLKVTKRMKQPIYVYYQLENFYQNHRRYVKSRSDSQLRSTKYENQISACKPEDDVGGQPIVPCGLIAWSLFNDTYALSRNNVSLAVNKKGIAWKSDKEHKFGNKVFPKNFQKGNITGGATLDPRIPLSEQEDLIVWMRTAALPTFRKLYGKIESDLEMGDTIHVKLNNNYNTYSFNGKKKLVLSTTSWLGGKNDFLGIAYLTVGGICFILALAFTIMYLVKPRRLGDPSYLSWNRNPGGR</sequence>
<comment type="function">
    <text evidence="1 5">Required for the lipid transport activity of the ALA/ALIS P4-ATPase complex.</text>
</comment>
<comment type="subunit">
    <text evidence="4 5">Interacts with ALA2 and ALA3 in a heterologous system.</text>
</comment>
<comment type="interaction">
    <interactant intactId="EBI-4463103">
        <id>Q9SLK2</id>
    </interactant>
    <interactant intactId="EBI-4424563">
        <id>Q93Z00</id>
        <label>TCP14</label>
    </interactant>
    <organismsDiffer>false</organismsDiffer>
    <experiments>2</experiments>
</comment>
<comment type="subcellular location">
    <subcellularLocation>
        <location evidence="5">Golgi apparatus membrane</location>
        <topology evidence="5">Multi-pass membrane protein</topology>
    </subcellularLocation>
    <subcellularLocation>
        <location evidence="5">Prevacuolar compartment membrane</location>
        <topology evidence="5">Multi-pass membrane protein</topology>
    </subcellularLocation>
    <subcellularLocation>
        <location evidence="5">Endoplasmic reticulum membrane</location>
        <topology evidence="5">Multi-pass membrane protein</topology>
    </subcellularLocation>
    <text>In a heterologous system, the final intracellular localization after exit from the endoplasmic reticulum is the prevacuolar compartment in the presence of ALA2 and the Golgi in the presence of ALA3.</text>
</comment>
<comment type="tissue specificity">
    <text evidence="4">Expressed in roots, leaves, stems, flowers and siliques.</text>
</comment>
<comment type="similarity">
    <text evidence="6">Belongs to the CDC50/LEM3 family.</text>
</comment>
<organism>
    <name type="scientific">Arabidopsis thaliana</name>
    <name type="common">Mouse-ear cress</name>
    <dbReference type="NCBI Taxonomy" id="3702"/>
    <lineage>
        <taxon>Eukaryota</taxon>
        <taxon>Viridiplantae</taxon>
        <taxon>Streptophyta</taxon>
        <taxon>Embryophyta</taxon>
        <taxon>Tracheophyta</taxon>
        <taxon>Spermatophyta</taxon>
        <taxon>Magnoliopsida</taxon>
        <taxon>eudicotyledons</taxon>
        <taxon>Gunneridae</taxon>
        <taxon>Pentapetalae</taxon>
        <taxon>rosids</taxon>
        <taxon>malvids</taxon>
        <taxon>Brassicales</taxon>
        <taxon>Brassicaceae</taxon>
        <taxon>Camelineae</taxon>
        <taxon>Arabidopsis</taxon>
    </lineage>
</organism>
<evidence type="ECO:0000250" key="1"/>
<evidence type="ECO:0000255" key="2"/>
<evidence type="ECO:0000256" key="3">
    <source>
        <dbReference type="SAM" id="MobiDB-lite"/>
    </source>
</evidence>
<evidence type="ECO:0000269" key="4">
    <source>
    </source>
</evidence>
<evidence type="ECO:0000269" key="5">
    <source>
    </source>
</evidence>
<evidence type="ECO:0000305" key="6"/>
<evidence type="ECO:0007744" key="7">
    <source>
    </source>
</evidence>
<name>ALIS3_ARATH</name>
<keyword id="KW-0007">Acetylation</keyword>
<keyword id="KW-0256">Endoplasmic reticulum</keyword>
<keyword id="KW-0325">Glycoprotein</keyword>
<keyword id="KW-0333">Golgi apparatus</keyword>
<keyword id="KW-0472">Membrane</keyword>
<keyword id="KW-1185">Reference proteome</keyword>
<keyword id="KW-0812">Transmembrane</keyword>
<keyword id="KW-1133">Transmembrane helix</keyword>
<feature type="initiator methionine" description="Removed" evidence="7">
    <location>
        <position position="1"/>
    </location>
</feature>
<feature type="chain" id="PRO_0000366956" description="ALA-interacting subunit 3">
    <location>
        <begin position="2"/>
        <end position="349"/>
    </location>
</feature>
<feature type="transmembrane region" description="Helical" evidence="2">
    <location>
        <begin position="50"/>
        <end position="70"/>
    </location>
</feature>
<feature type="transmembrane region" description="Helical" evidence="2">
    <location>
        <begin position="305"/>
        <end position="325"/>
    </location>
</feature>
<feature type="region of interest" description="Disordered" evidence="3">
    <location>
        <begin position="1"/>
        <end position="30"/>
    </location>
</feature>
<feature type="compositionally biased region" description="Low complexity" evidence="3">
    <location>
        <begin position="1"/>
        <end position="21"/>
    </location>
</feature>
<feature type="modified residue" description="N-acetylserine" evidence="7">
    <location>
        <position position="2"/>
    </location>
</feature>
<feature type="glycosylation site" description="N-linked (GlcNAc...) asparagine" evidence="2">
    <location>
        <position position="181"/>
    </location>
</feature>
<feature type="glycosylation site" description="N-linked (GlcNAc...) asparagine" evidence="2">
    <location>
        <position position="190"/>
    </location>
</feature>
<feature type="glycosylation site" description="N-linked (GlcNAc...) asparagine" evidence="2">
    <location>
        <position position="223"/>
    </location>
</feature>
<proteinExistence type="evidence at protein level"/>
<reference key="1">
    <citation type="journal article" date="2000" name="Nature">
        <title>Sequence and analysis of chromosome 1 of the plant Arabidopsis thaliana.</title>
        <authorList>
            <person name="Theologis A."/>
            <person name="Ecker J.R."/>
            <person name="Palm C.J."/>
            <person name="Federspiel N.A."/>
            <person name="Kaul S."/>
            <person name="White O."/>
            <person name="Alonso J."/>
            <person name="Altafi H."/>
            <person name="Araujo R."/>
            <person name="Bowman C.L."/>
            <person name="Brooks S.Y."/>
            <person name="Buehler E."/>
            <person name="Chan A."/>
            <person name="Chao Q."/>
            <person name="Chen H."/>
            <person name="Cheuk R.F."/>
            <person name="Chin C.W."/>
            <person name="Chung M.K."/>
            <person name="Conn L."/>
            <person name="Conway A.B."/>
            <person name="Conway A.R."/>
            <person name="Creasy T.H."/>
            <person name="Dewar K."/>
            <person name="Dunn P."/>
            <person name="Etgu P."/>
            <person name="Feldblyum T.V."/>
            <person name="Feng J.-D."/>
            <person name="Fong B."/>
            <person name="Fujii C.Y."/>
            <person name="Gill J.E."/>
            <person name="Goldsmith A.D."/>
            <person name="Haas B."/>
            <person name="Hansen N.F."/>
            <person name="Hughes B."/>
            <person name="Huizar L."/>
            <person name="Hunter J.L."/>
            <person name="Jenkins J."/>
            <person name="Johnson-Hopson C."/>
            <person name="Khan S."/>
            <person name="Khaykin E."/>
            <person name="Kim C.J."/>
            <person name="Koo H.L."/>
            <person name="Kremenetskaia I."/>
            <person name="Kurtz D.B."/>
            <person name="Kwan A."/>
            <person name="Lam B."/>
            <person name="Langin-Hooper S."/>
            <person name="Lee A."/>
            <person name="Lee J.M."/>
            <person name="Lenz C.A."/>
            <person name="Li J.H."/>
            <person name="Li Y.-P."/>
            <person name="Lin X."/>
            <person name="Liu S.X."/>
            <person name="Liu Z.A."/>
            <person name="Luros J.S."/>
            <person name="Maiti R."/>
            <person name="Marziali A."/>
            <person name="Militscher J."/>
            <person name="Miranda M."/>
            <person name="Nguyen M."/>
            <person name="Nierman W.C."/>
            <person name="Osborne B.I."/>
            <person name="Pai G."/>
            <person name="Peterson J."/>
            <person name="Pham P.K."/>
            <person name="Rizzo M."/>
            <person name="Rooney T."/>
            <person name="Rowley D."/>
            <person name="Sakano H."/>
            <person name="Salzberg S.L."/>
            <person name="Schwartz J.R."/>
            <person name="Shinn P."/>
            <person name="Southwick A.M."/>
            <person name="Sun H."/>
            <person name="Tallon L.J."/>
            <person name="Tambunga G."/>
            <person name="Toriumi M.J."/>
            <person name="Town C.D."/>
            <person name="Utterback T."/>
            <person name="Van Aken S."/>
            <person name="Vaysberg M."/>
            <person name="Vysotskaia V.S."/>
            <person name="Walker M."/>
            <person name="Wu D."/>
            <person name="Yu G."/>
            <person name="Fraser C.M."/>
            <person name="Venter J.C."/>
            <person name="Davis R.W."/>
        </authorList>
    </citation>
    <scope>NUCLEOTIDE SEQUENCE [LARGE SCALE GENOMIC DNA]</scope>
    <source>
        <strain>cv. Columbia</strain>
    </source>
</reference>
<reference key="2">
    <citation type="journal article" date="2017" name="Plant J.">
        <title>Araport11: a complete reannotation of the Arabidopsis thaliana reference genome.</title>
        <authorList>
            <person name="Cheng C.Y."/>
            <person name="Krishnakumar V."/>
            <person name="Chan A.P."/>
            <person name="Thibaud-Nissen F."/>
            <person name="Schobel S."/>
            <person name="Town C.D."/>
        </authorList>
    </citation>
    <scope>GENOME REANNOTATION</scope>
    <source>
        <strain>cv. Columbia</strain>
    </source>
</reference>
<reference key="3">
    <citation type="journal article" date="2003" name="Science">
        <title>Empirical analysis of transcriptional activity in the Arabidopsis genome.</title>
        <authorList>
            <person name="Yamada K."/>
            <person name="Lim J."/>
            <person name="Dale J.M."/>
            <person name="Chen H."/>
            <person name="Shinn P."/>
            <person name="Palm C.J."/>
            <person name="Southwick A.M."/>
            <person name="Wu H.C."/>
            <person name="Kim C.J."/>
            <person name="Nguyen M."/>
            <person name="Pham P.K."/>
            <person name="Cheuk R.F."/>
            <person name="Karlin-Newmann G."/>
            <person name="Liu S.X."/>
            <person name="Lam B."/>
            <person name="Sakano H."/>
            <person name="Wu T."/>
            <person name="Yu G."/>
            <person name="Miranda M."/>
            <person name="Quach H.L."/>
            <person name="Tripp M."/>
            <person name="Chang C.H."/>
            <person name="Lee J.M."/>
            <person name="Toriumi M.J."/>
            <person name="Chan M.M."/>
            <person name="Tang C.C."/>
            <person name="Onodera C.S."/>
            <person name="Deng J.M."/>
            <person name="Akiyama K."/>
            <person name="Ansari Y."/>
            <person name="Arakawa T."/>
            <person name="Banh J."/>
            <person name="Banno F."/>
            <person name="Bowser L."/>
            <person name="Brooks S.Y."/>
            <person name="Carninci P."/>
            <person name="Chao Q."/>
            <person name="Choy N."/>
            <person name="Enju A."/>
            <person name="Goldsmith A.D."/>
            <person name="Gurjal M."/>
            <person name="Hansen N.F."/>
            <person name="Hayashizaki Y."/>
            <person name="Johnson-Hopson C."/>
            <person name="Hsuan V.W."/>
            <person name="Iida K."/>
            <person name="Karnes M."/>
            <person name="Khan S."/>
            <person name="Koesema E."/>
            <person name="Ishida J."/>
            <person name="Jiang P.X."/>
            <person name="Jones T."/>
            <person name="Kawai J."/>
            <person name="Kamiya A."/>
            <person name="Meyers C."/>
            <person name="Nakajima M."/>
            <person name="Narusaka M."/>
            <person name="Seki M."/>
            <person name="Sakurai T."/>
            <person name="Satou M."/>
            <person name="Tamse R."/>
            <person name="Vaysberg M."/>
            <person name="Wallender E.K."/>
            <person name="Wong C."/>
            <person name="Yamamura Y."/>
            <person name="Yuan S."/>
            <person name="Shinozaki K."/>
            <person name="Davis R.W."/>
            <person name="Theologis A."/>
            <person name="Ecker J.R."/>
        </authorList>
    </citation>
    <scope>NUCLEOTIDE SEQUENCE [LARGE SCALE MRNA]</scope>
    <source>
        <strain>cv. Columbia</strain>
    </source>
</reference>
<reference key="4">
    <citation type="journal article" date="2008" name="Plant Cell">
        <title>The Arabidopsis P4-ATPase ALA3 localizes to the Golgi and requires a beta-subunit to function in lipid translocation and secretory vesicle formation.</title>
        <authorList>
            <person name="Poulsen L.R."/>
            <person name="Lopez-Marques R.L."/>
            <person name="McDowell S.C."/>
            <person name="Okkeri J."/>
            <person name="Licht D."/>
            <person name="Schulz A."/>
            <person name="Pomorski T."/>
            <person name="Harper J.F."/>
            <person name="Palmgren M.G."/>
        </authorList>
    </citation>
    <scope>TISSUE SPECIFICITY</scope>
    <scope>INTERACTION WITH ALA3</scope>
    <scope>NOMENCLATURE</scope>
</reference>
<reference key="5">
    <citation type="journal article" date="2010" name="Mol. Biol. Cell">
        <title>Intracellular targeting signals and lipid specificity determinants of the ALA/ALIS P4-ATPase complex reside in the catalytic ALA alpha-subunit.</title>
        <authorList>
            <person name="Lopez-Marques R.L."/>
            <person name="Poulsen L.R."/>
            <person name="Hanisch S."/>
            <person name="Meffert K."/>
            <person name="Buch-Pedersen M.J."/>
            <person name="Jakobsen M.K."/>
            <person name="Pomorski T.G."/>
            <person name="Palmgren M.G."/>
        </authorList>
    </citation>
    <scope>FUNCTION</scope>
    <scope>SUBCELLULAR LOCATION</scope>
    <scope>INTERACTION WITH ALA2 AND ALA3</scope>
</reference>
<reference key="6">
    <citation type="journal article" date="2012" name="Mol. Cell. Proteomics">
        <title>Comparative large-scale characterisation of plant vs. mammal proteins reveals similar and idiosyncratic N-alpha acetylation features.</title>
        <authorList>
            <person name="Bienvenut W.V."/>
            <person name="Sumpton D."/>
            <person name="Martinez A."/>
            <person name="Lilla S."/>
            <person name="Espagne C."/>
            <person name="Meinnel T."/>
            <person name="Giglione C."/>
        </authorList>
    </citation>
    <scope>ACETYLATION [LARGE SCALE ANALYSIS] AT SER-2</scope>
    <scope>CLEAVAGE OF INITIATOR METHIONINE [LARGE SCALE ANALYSIS]</scope>
    <scope>IDENTIFICATION BY MASS SPECTROMETRY [LARGE SCALE ANALYSIS]</scope>
</reference>
<gene>
    <name type="primary">ALIS3</name>
    <name type="ordered locus">At1g54320</name>
    <name type="ORF">F20D21.14</name>
    <name type="ORF">F20D21_50</name>
</gene>
<protein>
    <recommendedName>
        <fullName>ALA-interacting subunit 3</fullName>
        <shortName>AtALIS3</shortName>
    </recommendedName>
</protein>
<accession>Q9SLK2</accession>
<dbReference type="EMBL" id="AC005287">
    <property type="protein sequence ID" value="AAD25612.1"/>
    <property type="molecule type" value="Genomic_DNA"/>
</dbReference>
<dbReference type="EMBL" id="CP002684">
    <property type="protein sequence ID" value="AEE33080.1"/>
    <property type="molecule type" value="Genomic_DNA"/>
</dbReference>
<dbReference type="EMBL" id="AY045672">
    <property type="protein sequence ID" value="AAK74030.1"/>
    <property type="molecule type" value="mRNA"/>
</dbReference>
<dbReference type="EMBL" id="AY053406">
    <property type="protein sequence ID" value="AAK96636.1"/>
    <property type="molecule type" value="mRNA"/>
</dbReference>
<dbReference type="EMBL" id="AF446869">
    <property type="protein sequence ID" value="AAL38602.1"/>
    <property type="molecule type" value="mRNA"/>
</dbReference>
<dbReference type="PIR" id="G96584">
    <property type="entry name" value="G96584"/>
</dbReference>
<dbReference type="RefSeq" id="NP_564656.1">
    <property type="nucleotide sequence ID" value="NM_104310.4"/>
</dbReference>
<dbReference type="SMR" id="Q9SLK2"/>
<dbReference type="BioGRID" id="27098">
    <property type="interactions" value="33"/>
</dbReference>
<dbReference type="FunCoup" id="Q9SLK2">
    <property type="interactions" value="4028"/>
</dbReference>
<dbReference type="IntAct" id="Q9SLK2">
    <property type="interactions" value="30"/>
</dbReference>
<dbReference type="STRING" id="3702.Q9SLK2"/>
<dbReference type="GlyCosmos" id="Q9SLK2">
    <property type="glycosylation" value="3 sites, No reported glycans"/>
</dbReference>
<dbReference type="GlyGen" id="Q9SLK2">
    <property type="glycosylation" value="3 sites"/>
</dbReference>
<dbReference type="iPTMnet" id="Q9SLK2"/>
<dbReference type="SwissPalm" id="Q9SLK2"/>
<dbReference type="PaxDb" id="3702-AT1G54320.1"/>
<dbReference type="ProteomicsDB" id="244979"/>
<dbReference type="EnsemblPlants" id="AT1G54320.1">
    <property type="protein sequence ID" value="AT1G54320.1"/>
    <property type="gene ID" value="AT1G54320"/>
</dbReference>
<dbReference type="GeneID" id="841873"/>
<dbReference type="Gramene" id="AT1G54320.1">
    <property type="protein sequence ID" value="AT1G54320.1"/>
    <property type="gene ID" value="AT1G54320"/>
</dbReference>
<dbReference type="KEGG" id="ath:AT1G54320"/>
<dbReference type="Araport" id="AT1G54320"/>
<dbReference type="TAIR" id="AT1G54320"/>
<dbReference type="eggNOG" id="KOG2952">
    <property type="taxonomic scope" value="Eukaryota"/>
</dbReference>
<dbReference type="HOGENOM" id="CLU_025025_1_1_1"/>
<dbReference type="InParanoid" id="Q9SLK2"/>
<dbReference type="OMA" id="TWNNDQP"/>
<dbReference type="OrthoDB" id="340608at2759"/>
<dbReference type="PhylomeDB" id="Q9SLK2"/>
<dbReference type="PRO" id="PR:Q9SLK2"/>
<dbReference type="Proteomes" id="UP000006548">
    <property type="component" value="Chromosome 1"/>
</dbReference>
<dbReference type="ExpressionAtlas" id="Q9SLK2">
    <property type="expression patterns" value="baseline and differential"/>
</dbReference>
<dbReference type="GO" id="GO:0005789">
    <property type="term" value="C:endoplasmic reticulum membrane"/>
    <property type="evidence" value="ECO:0007669"/>
    <property type="project" value="UniProtKB-SubCell"/>
</dbReference>
<dbReference type="GO" id="GO:0000139">
    <property type="term" value="C:Golgi membrane"/>
    <property type="evidence" value="ECO:0007669"/>
    <property type="project" value="UniProtKB-SubCell"/>
</dbReference>
<dbReference type="GO" id="GO:0005634">
    <property type="term" value="C:nucleus"/>
    <property type="evidence" value="ECO:0007005"/>
    <property type="project" value="TAIR"/>
</dbReference>
<dbReference type="InterPro" id="IPR005045">
    <property type="entry name" value="CDC50/LEM3_fam"/>
</dbReference>
<dbReference type="PANTHER" id="PTHR10926:SF0">
    <property type="entry name" value="CDC50, ISOFORM A"/>
    <property type="match status" value="1"/>
</dbReference>
<dbReference type="PANTHER" id="PTHR10926">
    <property type="entry name" value="CELL CYCLE CONTROL PROTEIN 50"/>
    <property type="match status" value="1"/>
</dbReference>
<dbReference type="Pfam" id="PF03381">
    <property type="entry name" value="CDC50"/>
    <property type="match status" value="1"/>
</dbReference>
<dbReference type="PIRSF" id="PIRSF015840">
    <property type="entry name" value="DUF284_TM_euk"/>
    <property type="match status" value="1"/>
</dbReference>